<proteinExistence type="inferred from homology"/>
<comment type="function">
    <text evidence="1">Catalyzes the N-acylation of UDP-3-O-acylglucosamine using 3-hydroxyacyl-ACP as the acyl donor. Is involved in the biosynthesis of lipid A, a phosphorylated glycolipid that anchors the lipopolysaccharide to the outer membrane of the cell.</text>
</comment>
<comment type="catalytic activity">
    <reaction evidence="1">
        <text>a UDP-3-O-[(3R)-3-hydroxyacyl]-alpha-D-glucosamine + a (3R)-hydroxyacyl-[ACP] = a UDP-2-N,3-O-bis[(3R)-3-hydroxyacyl]-alpha-D-glucosamine + holo-[ACP] + H(+)</text>
        <dbReference type="Rhea" id="RHEA:53836"/>
        <dbReference type="Rhea" id="RHEA-COMP:9685"/>
        <dbReference type="Rhea" id="RHEA-COMP:9945"/>
        <dbReference type="ChEBI" id="CHEBI:15378"/>
        <dbReference type="ChEBI" id="CHEBI:64479"/>
        <dbReference type="ChEBI" id="CHEBI:78827"/>
        <dbReference type="ChEBI" id="CHEBI:137740"/>
        <dbReference type="ChEBI" id="CHEBI:137748"/>
        <dbReference type="EC" id="2.3.1.191"/>
    </reaction>
</comment>
<comment type="pathway">
    <text evidence="1">Bacterial outer membrane biogenesis; LPS lipid A biosynthesis.</text>
</comment>
<comment type="subunit">
    <text evidence="1">Homotrimer.</text>
</comment>
<comment type="similarity">
    <text evidence="1">Belongs to the transferase hexapeptide repeat family. LpxD subfamily.</text>
</comment>
<comment type="sequence caution" evidence="2">
    <conflict type="erroneous initiation">
        <sequence resource="EMBL-CDS" id="ABG62785"/>
    </conflict>
</comment>
<evidence type="ECO:0000255" key="1">
    <source>
        <dbReference type="HAMAP-Rule" id="MF_00523"/>
    </source>
</evidence>
<evidence type="ECO:0000305" key="2"/>
<accession>Q11IJ0</accession>
<dbReference type="EC" id="2.3.1.191" evidence="1"/>
<dbReference type="EMBL" id="CP000390">
    <property type="protein sequence ID" value="ABG62785.1"/>
    <property type="status" value="ALT_INIT"/>
    <property type="molecule type" value="Genomic_DNA"/>
</dbReference>
<dbReference type="SMR" id="Q11IJ0"/>
<dbReference type="STRING" id="266779.Meso_1389"/>
<dbReference type="KEGG" id="mes:Meso_1389"/>
<dbReference type="eggNOG" id="COG1044">
    <property type="taxonomic scope" value="Bacteria"/>
</dbReference>
<dbReference type="HOGENOM" id="CLU_049865_0_2_5"/>
<dbReference type="OrthoDB" id="9784739at2"/>
<dbReference type="UniPathway" id="UPA00973"/>
<dbReference type="GO" id="GO:0016020">
    <property type="term" value="C:membrane"/>
    <property type="evidence" value="ECO:0007669"/>
    <property type="project" value="GOC"/>
</dbReference>
<dbReference type="GO" id="GO:0016410">
    <property type="term" value="F:N-acyltransferase activity"/>
    <property type="evidence" value="ECO:0007669"/>
    <property type="project" value="InterPro"/>
</dbReference>
<dbReference type="GO" id="GO:0009245">
    <property type="term" value="P:lipid A biosynthetic process"/>
    <property type="evidence" value="ECO:0007669"/>
    <property type="project" value="UniProtKB-UniRule"/>
</dbReference>
<dbReference type="CDD" id="cd03352">
    <property type="entry name" value="LbH_LpxD"/>
    <property type="match status" value="1"/>
</dbReference>
<dbReference type="Gene3D" id="2.160.10.10">
    <property type="entry name" value="Hexapeptide repeat proteins"/>
    <property type="match status" value="1"/>
</dbReference>
<dbReference type="Gene3D" id="3.40.1390.10">
    <property type="entry name" value="MurE/MurF, N-terminal domain"/>
    <property type="match status" value="1"/>
</dbReference>
<dbReference type="HAMAP" id="MF_00523">
    <property type="entry name" value="LpxD"/>
    <property type="match status" value="1"/>
</dbReference>
<dbReference type="InterPro" id="IPR001451">
    <property type="entry name" value="Hexapep"/>
</dbReference>
<dbReference type="InterPro" id="IPR018357">
    <property type="entry name" value="Hexapep_transf_CS"/>
</dbReference>
<dbReference type="InterPro" id="IPR007691">
    <property type="entry name" value="LpxD"/>
</dbReference>
<dbReference type="InterPro" id="IPR011004">
    <property type="entry name" value="Trimer_LpxA-like_sf"/>
</dbReference>
<dbReference type="InterPro" id="IPR020573">
    <property type="entry name" value="UDP_GlcNAc_AcTrfase_non-rep"/>
</dbReference>
<dbReference type="NCBIfam" id="TIGR01853">
    <property type="entry name" value="lipid_A_lpxD"/>
    <property type="match status" value="1"/>
</dbReference>
<dbReference type="NCBIfam" id="NF002060">
    <property type="entry name" value="PRK00892.1"/>
    <property type="match status" value="1"/>
</dbReference>
<dbReference type="PANTHER" id="PTHR43378">
    <property type="entry name" value="UDP-3-O-ACYLGLUCOSAMINE N-ACYLTRANSFERASE"/>
    <property type="match status" value="1"/>
</dbReference>
<dbReference type="PANTHER" id="PTHR43378:SF2">
    <property type="entry name" value="UDP-3-O-ACYLGLUCOSAMINE N-ACYLTRANSFERASE 1, MITOCHONDRIAL-RELATED"/>
    <property type="match status" value="1"/>
</dbReference>
<dbReference type="Pfam" id="PF00132">
    <property type="entry name" value="Hexapep"/>
    <property type="match status" value="1"/>
</dbReference>
<dbReference type="Pfam" id="PF04613">
    <property type="entry name" value="LpxD"/>
    <property type="match status" value="1"/>
</dbReference>
<dbReference type="SUPFAM" id="SSF51161">
    <property type="entry name" value="Trimeric LpxA-like enzymes"/>
    <property type="match status" value="1"/>
</dbReference>
<dbReference type="PROSITE" id="PS00101">
    <property type="entry name" value="HEXAPEP_TRANSFERASES"/>
    <property type="match status" value="1"/>
</dbReference>
<feature type="chain" id="PRO_0000264395" description="UDP-3-O-acylglucosamine N-acyltransferase">
    <location>
        <begin position="1"/>
        <end position="350"/>
    </location>
</feature>
<feature type="active site" description="Proton acceptor" evidence="1">
    <location>
        <position position="257"/>
    </location>
</feature>
<sequence length="350" mass="36375">MTEPAFFAPARRFEVGEIAALTGARLRDASQEKITISRLAPAAEGGEETLVFIDGRRHASRIGSVRAAALLCSEELAENAPDGVAVLVSPKPQQAFAMVARLLFPEANRPQPVTGETGVSPRAVIAEGAVVEDGAIIEAGAVIGVGASVGRGTIVGPNTVIGARCSIGRDGYVGPNVMLQYAVIGDRVIIHPGAQIGQDGFGFLPGPNGFEKNPQIGRVIIQDDVEIGANTTIDRGALSDTIIGEGTKIDNLVQIGHNVHIGRRCVIAGLCGLSGSVKLGDYVMLGGQVGIADHITIGNRAQLAASSGVMDDVPEGERWAGVPAKPMRQAFREIAALRSLVQDMRKGSKG</sequence>
<gene>
    <name evidence="1" type="primary">lpxD</name>
    <name type="ordered locus">Meso_1389</name>
</gene>
<name>LPXD_CHESB</name>
<protein>
    <recommendedName>
        <fullName evidence="1">UDP-3-O-acylglucosamine N-acyltransferase</fullName>
        <ecNumber evidence="1">2.3.1.191</ecNumber>
    </recommendedName>
</protein>
<reference key="1">
    <citation type="submission" date="2006-06" db="EMBL/GenBank/DDBJ databases">
        <title>Complete sequence of chromosome of Mesorhizobium sp. BNC1.</title>
        <authorList>
            <consortium name="US DOE Joint Genome Institute"/>
            <person name="Copeland A."/>
            <person name="Lucas S."/>
            <person name="Lapidus A."/>
            <person name="Barry K."/>
            <person name="Detter J.C."/>
            <person name="Glavina del Rio T."/>
            <person name="Hammon N."/>
            <person name="Israni S."/>
            <person name="Dalin E."/>
            <person name="Tice H."/>
            <person name="Pitluck S."/>
            <person name="Chertkov O."/>
            <person name="Brettin T."/>
            <person name="Bruce D."/>
            <person name="Han C."/>
            <person name="Tapia R."/>
            <person name="Gilna P."/>
            <person name="Schmutz J."/>
            <person name="Larimer F."/>
            <person name="Land M."/>
            <person name="Hauser L."/>
            <person name="Kyrpides N."/>
            <person name="Mikhailova N."/>
            <person name="Richardson P."/>
        </authorList>
    </citation>
    <scope>NUCLEOTIDE SEQUENCE [LARGE SCALE GENOMIC DNA]</scope>
    <source>
        <strain>BNC1</strain>
    </source>
</reference>
<organism>
    <name type="scientific">Chelativorans sp. (strain BNC1)</name>
    <dbReference type="NCBI Taxonomy" id="266779"/>
    <lineage>
        <taxon>Bacteria</taxon>
        <taxon>Pseudomonadati</taxon>
        <taxon>Pseudomonadota</taxon>
        <taxon>Alphaproteobacteria</taxon>
        <taxon>Hyphomicrobiales</taxon>
        <taxon>Phyllobacteriaceae</taxon>
        <taxon>Chelativorans</taxon>
    </lineage>
</organism>
<keyword id="KW-0012">Acyltransferase</keyword>
<keyword id="KW-0441">Lipid A biosynthesis</keyword>
<keyword id="KW-0444">Lipid biosynthesis</keyword>
<keyword id="KW-0443">Lipid metabolism</keyword>
<keyword id="KW-0677">Repeat</keyword>
<keyword id="KW-0808">Transferase</keyword>